<protein>
    <recommendedName>
        <fullName evidence="1">UPF0060 membrane protein YnfA</fullName>
    </recommendedName>
</protein>
<proteinExistence type="inferred from homology"/>
<accession>B5BK72</accession>
<feature type="chain" id="PRO_1000089260" description="UPF0060 membrane protein YnfA">
    <location>
        <begin position="1"/>
        <end position="108"/>
    </location>
</feature>
<feature type="topological domain" description="Periplasmic" evidence="1">
    <location>
        <begin position="1"/>
        <end position="5"/>
    </location>
</feature>
<feature type="transmembrane region" description="Helical" evidence="1">
    <location>
        <begin position="6"/>
        <end position="26"/>
    </location>
</feature>
<feature type="topological domain" description="Cytoplasmic" evidence="1">
    <location>
        <begin position="27"/>
        <end position="30"/>
    </location>
</feature>
<feature type="transmembrane region" description="Helical" evidence="1">
    <location>
        <begin position="31"/>
        <end position="51"/>
    </location>
</feature>
<feature type="topological domain" description="Periplasmic" evidence="1">
    <location>
        <begin position="52"/>
        <end position="60"/>
    </location>
</feature>
<feature type="transmembrane region" description="Helical" evidence="1">
    <location>
        <begin position="61"/>
        <end position="81"/>
    </location>
</feature>
<feature type="topological domain" description="Cytoplasmic" evidence="1">
    <location>
        <begin position="82"/>
        <end position="84"/>
    </location>
</feature>
<feature type="transmembrane region" description="Helical" evidence="1">
    <location>
        <begin position="85"/>
        <end position="105"/>
    </location>
</feature>
<feature type="topological domain" description="Periplasmic" evidence="1">
    <location>
        <begin position="106"/>
        <end position="108"/>
    </location>
</feature>
<evidence type="ECO:0000255" key="1">
    <source>
        <dbReference type="HAMAP-Rule" id="MF_00010"/>
    </source>
</evidence>
<name>YNFA_SALPK</name>
<organism>
    <name type="scientific">Salmonella paratyphi A (strain AKU_12601)</name>
    <dbReference type="NCBI Taxonomy" id="554290"/>
    <lineage>
        <taxon>Bacteria</taxon>
        <taxon>Pseudomonadati</taxon>
        <taxon>Pseudomonadota</taxon>
        <taxon>Gammaproteobacteria</taxon>
        <taxon>Enterobacterales</taxon>
        <taxon>Enterobacteriaceae</taxon>
        <taxon>Salmonella</taxon>
    </lineage>
</organism>
<keyword id="KW-0997">Cell inner membrane</keyword>
<keyword id="KW-1003">Cell membrane</keyword>
<keyword id="KW-0472">Membrane</keyword>
<keyword id="KW-0812">Transmembrane</keyword>
<keyword id="KW-1133">Transmembrane helix</keyword>
<comment type="subcellular location">
    <subcellularLocation>
        <location evidence="1">Cell inner membrane</location>
        <topology evidence="1">Multi-pass membrane protein</topology>
    </subcellularLocation>
</comment>
<comment type="similarity">
    <text evidence="1">Belongs to the UPF0060 family.</text>
</comment>
<dbReference type="EMBL" id="FM200053">
    <property type="protein sequence ID" value="CAR59425.1"/>
    <property type="molecule type" value="Genomic_DNA"/>
</dbReference>
<dbReference type="RefSeq" id="WP_000921382.1">
    <property type="nucleotide sequence ID" value="NC_011147.1"/>
</dbReference>
<dbReference type="SMR" id="B5BK72"/>
<dbReference type="KEGG" id="sek:SSPA1256"/>
<dbReference type="HOGENOM" id="CLU_117653_2_1_6"/>
<dbReference type="Proteomes" id="UP000001869">
    <property type="component" value="Chromosome"/>
</dbReference>
<dbReference type="GO" id="GO:0005886">
    <property type="term" value="C:plasma membrane"/>
    <property type="evidence" value="ECO:0007669"/>
    <property type="project" value="UniProtKB-SubCell"/>
</dbReference>
<dbReference type="HAMAP" id="MF_00010">
    <property type="entry name" value="UPF0060"/>
    <property type="match status" value="1"/>
</dbReference>
<dbReference type="InterPro" id="IPR003844">
    <property type="entry name" value="UPF0060"/>
</dbReference>
<dbReference type="NCBIfam" id="NF002586">
    <property type="entry name" value="PRK02237.1"/>
    <property type="match status" value="1"/>
</dbReference>
<dbReference type="PANTHER" id="PTHR36116">
    <property type="entry name" value="UPF0060 MEMBRANE PROTEIN YNFA"/>
    <property type="match status" value="1"/>
</dbReference>
<dbReference type="PANTHER" id="PTHR36116:SF1">
    <property type="entry name" value="UPF0060 MEMBRANE PROTEIN YNFA"/>
    <property type="match status" value="1"/>
</dbReference>
<dbReference type="Pfam" id="PF02694">
    <property type="entry name" value="UPF0060"/>
    <property type="match status" value="1"/>
</dbReference>
<dbReference type="SUPFAM" id="SSF103481">
    <property type="entry name" value="Multidrug resistance efflux transporter EmrE"/>
    <property type="match status" value="1"/>
</dbReference>
<sequence length="108" mass="11948">MLKTTLLFFVTALCEIIGCFLPWLWIKRGASVWWLLPAAASLALFVWLLTLHPAASGRVYAAYGGVYVCTALLWLRVVDGVRLTVYDWCGALIALCGMLIIVVGWGRT</sequence>
<gene>
    <name evidence="1" type="primary">ynfA</name>
    <name type="ordered locus">SSPA1256</name>
</gene>
<reference key="1">
    <citation type="journal article" date="2009" name="BMC Genomics">
        <title>Pseudogene accumulation in the evolutionary histories of Salmonella enterica serovars Paratyphi A and Typhi.</title>
        <authorList>
            <person name="Holt K.E."/>
            <person name="Thomson N.R."/>
            <person name="Wain J."/>
            <person name="Langridge G.C."/>
            <person name="Hasan R."/>
            <person name="Bhutta Z.A."/>
            <person name="Quail M.A."/>
            <person name="Norbertczak H."/>
            <person name="Walker D."/>
            <person name="Simmonds M."/>
            <person name="White B."/>
            <person name="Bason N."/>
            <person name="Mungall K."/>
            <person name="Dougan G."/>
            <person name="Parkhill J."/>
        </authorList>
    </citation>
    <scope>NUCLEOTIDE SEQUENCE [LARGE SCALE GENOMIC DNA]</scope>
    <source>
        <strain>AKU_12601</strain>
    </source>
</reference>